<keyword id="KW-0963">Cytoplasm</keyword>
<keyword id="KW-0489">Methyltransferase</keyword>
<keyword id="KW-1185">Reference proteome</keyword>
<keyword id="KW-0694">RNA-binding</keyword>
<keyword id="KW-0698">rRNA processing</keyword>
<keyword id="KW-0949">S-adenosyl-L-methionine</keyword>
<keyword id="KW-0808">Transferase</keyword>
<organism>
    <name type="scientific">Maricaulis maris (strain MCS10)</name>
    <name type="common">Caulobacter maris</name>
    <dbReference type="NCBI Taxonomy" id="394221"/>
    <lineage>
        <taxon>Bacteria</taxon>
        <taxon>Pseudomonadati</taxon>
        <taxon>Pseudomonadota</taxon>
        <taxon>Alphaproteobacteria</taxon>
        <taxon>Maricaulales</taxon>
        <taxon>Maricaulaceae</taxon>
        <taxon>Maricaulis</taxon>
    </lineage>
</organism>
<name>RSMA_MARMM</name>
<gene>
    <name evidence="1" type="primary">rsmA</name>
    <name evidence="1" type="synonym">ksgA</name>
    <name type="ordered locus">Mmar10_1221</name>
</gene>
<dbReference type="EC" id="2.1.1.182" evidence="1"/>
<dbReference type="EMBL" id="CP000449">
    <property type="protein sequence ID" value="ABI65514.1"/>
    <property type="molecule type" value="Genomic_DNA"/>
</dbReference>
<dbReference type="RefSeq" id="WP_011643161.1">
    <property type="nucleotide sequence ID" value="NC_008347.1"/>
</dbReference>
<dbReference type="SMR" id="Q0AQC3"/>
<dbReference type="STRING" id="394221.Mmar10_1221"/>
<dbReference type="KEGG" id="mmr:Mmar10_1221"/>
<dbReference type="eggNOG" id="COG0030">
    <property type="taxonomic scope" value="Bacteria"/>
</dbReference>
<dbReference type="HOGENOM" id="CLU_041220_0_1_5"/>
<dbReference type="OrthoDB" id="9814755at2"/>
<dbReference type="Proteomes" id="UP000001964">
    <property type="component" value="Chromosome"/>
</dbReference>
<dbReference type="GO" id="GO:0005829">
    <property type="term" value="C:cytosol"/>
    <property type="evidence" value="ECO:0007669"/>
    <property type="project" value="TreeGrafter"/>
</dbReference>
<dbReference type="GO" id="GO:0052908">
    <property type="term" value="F:16S rRNA (adenine(1518)-N(6)/adenine(1519)-N(6))-dimethyltransferase activity"/>
    <property type="evidence" value="ECO:0007669"/>
    <property type="project" value="UniProtKB-EC"/>
</dbReference>
<dbReference type="GO" id="GO:0003723">
    <property type="term" value="F:RNA binding"/>
    <property type="evidence" value="ECO:0007669"/>
    <property type="project" value="UniProtKB-KW"/>
</dbReference>
<dbReference type="CDD" id="cd02440">
    <property type="entry name" value="AdoMet_MTases"/>
    <property type="match status" value="1"/>
</dbReference>
<dbReference type="Gene3D" id="1.10.8.100">
    <property type="entry name" value="Ribosomal RNA adenine dimethylase-like, domain 2"/>
    <property type="match status" value="1"/>
</dbReference>
<dbReference type="Gene3D" id="3.40.50.150">
    <property type="entry name" value="Vaccinia Virus protein VP39"/>
    <property type="match status" value="1"/>
</dbReference>
<dbReference type="HAMAP" id="MF_00607">
    <property type="entry name" value="16SrRNA_methyltr_A"/>
    <property type="match status" value="1"/>
</dbReference>
<dbReference type="InterPro" id="IPR001737">
    <property type="entry name" value="KsgA/Erm"/>
</dbReference>
<dbReference type="InterPro" id="IPR023165">
    <property type="entry name" value="rRNA_Ade_diMease-like_C"/>
</dbReference>
<dbReference type="InterPro" id="IPR020596">
    <property type="entry name" value="rRNA_Ade_Mease_Trfase_CS"/>
</dbReference>
<dbReference type="InterPro" id="IPR020598">
    <property type="entry name" value="rRNA_Ade_methylase_Trfase_N"/>
</dbReference>
<dbReference type="InterPro" id="IPR011530">
    <property type="entry name" value="rRNA_adenine_dimethylase"/>
</dbReference>
<dbReference type="InterPro" id="IPR029063">
    <property type="entry name" value="SAM-dependent_MTases_sf"/>
</dbReference>
<dbReference type="NCBIfam" id="TIGR00755">
    <property type="entry name" value="ksgA"/>
    <property type="match status" value="1"/>
</dbReference>
<dbReference type="PANTHER" id="PTHR11727">
    <property type="entry name" value="DIMETHYLADENOSINE TRANSFERASE"/>
    <property type="match status" value="1"/>
</dbReference>
<dbReference type="PANTHER" id="PTHR11727:SF7">
    <property type="entry name" value="DIMETHYLADENOSINE TRANSFERASE-RELATED"/>
    <property type="match status" value="1"/>
</dbReference>
<dbReference type="Pfam" id="PF00398">
    <property type="entry name" value="RrnaAD"/>
    <property type="match status" value="1"/>
</dbReference>
<dbReference type="SMART" id="SM00650">
    <property type="entry name" value="rADc"/>
    <property type="match status" value="1"/>
</dbReference>
<dbReference type="SUPFAM" id="SSF53335">
    <property type="entry name" value="S-adenosyl-L-methionine-dependent methyltransferases"/>
    <property type="match status" value="1"/>
</dbReference>
<dbReference type="PROSITE" id="PS01131">
    <property type="entry name" value="RRNA_A_DIMETH"/>
    <property type="match status" value="1"/>
</dbReference>
<dbReference type="PROSITE" id="PS51689">
    <property type="entry name" value="SAM_RNA_A_N6_MT"/>
    <property type="match status" value="1"/>
</dbReference>
<protein>
    <recommendedName>
        <fullName evidence="1">Ribosomal RNA small subunit methyltransferase A</fullName>
        <ecNumber evidence="1">2.1.1.182</ecNumber>
    </recommendedName>
    <alternativeName>
        <fullName evidence="1">16S rRNA (adenine(1518)-N(6)/adenine(1519)-N(6))-dimethyltransferase</fullName>
    </alternativeName>
    <alternativeName>
        <fullName evidence="1">16S rRNA dimethyladenosine transferase</fullName>
    </alternativeName>
    <alternativeName>
        <fullName evidence="1">16S rRNA dimethylase</fullName>
    </alternativeName>
    <alternativeName>
        <fullName evidence="1">S-adenosylmethionine-6-N', N'-adenosyl(rRNA) dimethyltransferase</fullName>
    </alternativeName>
</protein>
<reference key="1">
    <citation type="submission" date="2006-08" db="EMBL/GenBank/DDBJ databases">
        <title>Complete sequence of Maricaulis maris MCS10.</title>
        <authorList>
            <consortium name="US DOE Joint Genome Institute"/>
            <person name="Copeland A."/>
            <person name="Lucas S."/>
            <person name="Lapidus A."/>
            <person name="Barry K."/>
            <person name="Detter J.C."/>
            <person name="Glavina del Rio T."/>
            <person name="Hammon N."/>
            <person name="Israni S."/>
            <person name="Dalin E."/>
            <person name="Tice H."/>
            <person name="Pitluck S."/>
            <person name="Saunders E."/>
            <person name="Brettin T."/>
            <person name="Bruce D."/>
            <person name="Han C."/>
            <person name="Tapia R."/>
            <person name="Gilna P."/>
            <person name="Schmutz J."/>
            <person name="Larimer F."/>
            <person name="Land M."/>
            <person name="Hauser L."/>
            <person name="Kyrpides N."/>
            <person name="Mikhailova N."/>
            <person name="Viollier P."/>
            <person name="Stephens C."/>
            <person name="Richardson P."/>
        </authorList>
    </citation>
    <scope>NUCLEOTIDE SEQUENCE [LARGE SCALE GENOMIC DNA]</scope>
    <source>
        <strain>MCS10</strain>
    </source>
</reference>
<sequence>MSLDQLPPLRDVIASHDLGAKKSFGQHFLLDLNLTAKIARLAGDMSRDQAIEVGPGPGGLTRAILAEGAASLLAVEMDSRFLGALDEINVASGGRLTVEQGDALEVDETALLTGPGDKVILSNLPYNVGTQLLIKWLQAEPIWWRRAVLMFQREVADRVVAQPGDKAYGRLAVISQSRCQAHLALKIPARAFTPPPKVESAVVVLDPLPEAQQFKDVVALERITASAFGQRRKTLRRSLAQAAGQGGTSADALLEEAGLNAGDRAEVIDITGFQSLARAWRAAYDAGRA</sequence>
<evidence type="ECO:0000255" key="1">
    <source>
        <dbReference type="HAMAP-Rule" id="MF_00607"/>
    </source>
</evidence>
<accession>Q0AQC3</accession>
<feature type="chain" id="PRO_1000072652" description="Ribosomal RNA small subunit methyltransferase A">
    <location>
        <begin position="1"/>
        <end position="289"/>
    </location>
</feature>
<feature type="binding site" evidence="1">
    <location>
        <position position="27"/>
    </location>
    <ligand>
        <name>S-adenosyl-L-methionine</name>
        <dbReference type="ChEBI" id="CHEBI:59789"/>
    </ligand>
</feature>
<feature type="binding site" evidence="1">
    <location>
        <position position="29"/>
    </location>
    <ligand>
        <name>S-adenosyl-L-methionine</name>
        <dbReference type="ChEBI" id="CHEBI:59789"/>
    </ligand>
</feature>
<feature type="binding site" evidence="1">
    <location>
        <position position="54"/>
    </location>
    <ligand>
        <name>S-adenosyl-L-methionine</name>
        <dbReference type="ChEBI" id="CHEBI:59789"/>
    </ligand>
</feature>
<feature type="binding site" evidence="1">
    <location>
        <position position="76"/>
    </location>
    <ligand>
        <name>S-adenosyl-L-methionine</name>
        <dbReference type="ChEBI" id="CHEBI:59789"/>
    </ligand>
</feature>
<feature type="binding site" evidence="1">
    <location>
        <position position="102"/>
    </location>
    <ligand>
        <name>S-adenosyl-L-methionine</name>
        <dbReference type="ChEBI" id="CHEBI:59789"/>
    </ligand>
</feature>
<feature type="binding site" evidence="1">
    <location>
        <position position="123"/>
    </location>
    <ligand>
        <name>S-adenosyl-L-methionine</name>
        <dbReference type="ChEBI" id="CHEBI:59789"/>
    </ligand>
</feature>
<proteinExistence type="inferred from homology"/>
<comment type="function">
    <text evidence="1">Specifically dimethylates two adjacent adenosines (A1518 and A1519) in the loop of a conserved hairpin near the 3'-end of 16S rRNA in the 30S particle. May play a critical role in biogenesis of 30S subunits.</text>
</comment>
<comment type="catalytic activity">
    <reaction evidence="1">
        <text>adenosine(1518)/adenosine(1519) in 16S rRNA + 4 S-adenosyl-L-methionine = N(6)-dimethyladenosine(1518)/N(6)-dimethyladenosine(1519) in 16S rRNA + 4 S-adenosyl-L-homocysteine + 4 H(+)</text>
        <dbReference type="Rhea" id="RHEA:19609"/>
        <dbReference type="Rhea" id="RHEA-COMP:10232"/>
        <dbReference type="Rhea" id="RHEA-COMP:10233"/>
        <dbReference type="ChEBI" id="CHEBI:15378"/>
        <dbReference type="ChEBI" id="CHEBI:57856"/>
        <dbReference type="ChEBI" id="CHEBI:59789"/>
        <dbReference type="ChEBI" id="CHEBI:74411"/>
        <dbReference type="ChEBI" id="CHEBI:74493"/>
        <dbReference type="EC" id="2.1.1.182"/>
    </reaction>
</comment>
<comment type="subcellular location">
    <subcellularLocation>
        <location evidence="1">Cytoplasm</location>
    </subcellularLocation>
</comment>
<comment type="similarity">
    <text evidence="1">Belongs to the class I-like SAM-binding methyltransferase superfamily. rRNA adenine N(6)-methyltransferase family. RsmA subfamily.</text>
</comment>